<accession>Q1AW38</accession>
<name>MIAA_RUBXD</name>
<evidence type="ECO:0000255" key="1">
    <source>
        <dbReference type="HAMAP-Rule" id="MF_00185"/>
    </source>
</evidence>
<sequence length="291" mass="31753">MRSARVVAVCGPTASGKSEVADELSALLTEAEGVWVPTVVVDSMQVYREIPEITNQARSRPAELVGVVPVTREWTVAEHRRRARAAIEGSGAGAAVLDAGTGMYLNATVLDIPLAPKVPREIRALAQRAAAGAANPRREARRLELELYGAPERGSIWEGEPAYELALIYLRPERASLDEAIARRSSRIARRGLADARRLQDLLEAGARVNPSVLGSIGVRELLSHLRGEISLPEAEETISVRTRHLARRQMRWFDKLARTLSGRARLVVSPSPEDPALRKALHSMHDIIGA</sequence>
<gene>
    <name evidence="1" type="primary">miaA</name>
    <name type="ordered locus">Rxyl_1428</name>
</gene>
<proteinExistence type="inferred from homology"/>
<feature type="chain" id="PRO_0000377299" description="tRNA dimethylallyltransferase">
    <location>
        <begin position="1"/>
        <end position="291"/>
    </location>
</feature>
<feature type="region of interest" description="Interaction with substrate tRNA" evidence="1">
    <location>
        <begin position="42"/>
        <end position="45"/>
    </location>
</feature>
<feature type="binding site" evidence="1">
    <location>
        <begin position="11"/>
        <end position="18"/>
    </location>
    <ligand>
        <name>ATP</name>
        <dbReference type="ChEBI" id="CHEBI:30616"/>
    </ligand>
</feature>
<feature type="binding site" evidence="1">
    <location>
        <begin position="13"/>
        <end position="18"/>
    </location>
    <ligand>
        <name>substrate</name>
    </ligand>
</feature>
<feature type="site" description="Interaction with substrate tRNA" evidence="1">
    <location>
        <position position="101"/>
    </location>
</feature>
<dbReference type="EC" id="2.5.1.75" evidence="1"/>
<dbReference type="EMBL" id="CP000386">
    <property type="protein sequence ID" value="ABG04390.1"/>
    <property type="molecule type" value="Genomic_DNA"/>
</dbReference>
<dbReference type="RefSeq" id="WP_011564407.1">
    <property type="nucleotide sequence ID" value="NC_008148.1"/>
</dbReference>
<dbReference type="SMR" id="Q1AW38"/>
<dbReference type="STRING" id="266117.Rxyl_1428"/>
<dbReference type="KEGG" id="rxy:Rxyl_1428"/>
<dbReference type="eggNOG" id="COG0324">
    <property type="taxonomic scope" value="Bacteria"/>
</dbReference>
<dbReference type="HOGENOM" id="CLU_032616_0_1_11"/>
<dbReference type="OrthoDB" id="9776390at2"/>
<dbReference type="PhylomeDB" id="Q1AW38"/>
<dbReference type="Proteomes" id="UP000006637">
    <property type="component" value="Chromosome"/>
</dbReference>
<dbReference type="GO" id="GO:0005524">
    <property type="term" value="F:ATP binding"/>
    <property type="evidence" value="ECO:0007669"/>
    <property type="project" value="UniProtKB-UniRule"/>
</dbReference>
<dbReference type="GO" id="GO:0052381">
    <property type="term" value="F:tRNA dimethylallyltransferase activity"/>
    <property type="evidence" value="ECO:0007669"/>
    <property type="project" value="UniProtKB-UniRule"/>
</dbReference>
<dbReference type="GO" id="GO:0006400">
    <property type="term" value="P:tRNA modification"/>
    <property type="evidence" value="ECO:0007669"/>
    <property type="project" value="TreeGrafter"/>
</dbReference>
<dbReference type="Gene3D" id="3.40.50.300">
    <property type="entry name" value="P-loop containing nucleotide triphosphate hydrolases"/>
    <property type="match status" value="1"/>
</dbReference>
<dbReference type="HAMAP" id="MF_00185">
    <property type="entry name" value="IPP_trans"/>
    <property type="match status" value="1"/>
</dbReference>
<dbReference type="InterPro" id="IPR039657">
    <property type="entry name" value="Dimethylallyltransferase"/>
</dbReference>
<dbReference type="InterPro" id="IPR018022">
    <property type="entry name" value="IPT"/>
</dbReference>
<dbReference type="InterPro" id="IPR027417">
    <property type="entry name" value="P-loop_NTPase"/>
</dbReference>
<dbReference type="PANTHER" id="PTHR11088">
    <property type="entry name" value="TRNA DIMETHYLALLYLTRANSFERASE"/>
    <property type="match status" value="1"/>
</dbReference>
<dbReference type="PANTHER" id="PTHR11088:SF60">
    <property type="entry name" value="TRNA DIMETHYLALLYLTRANSFERASE"/>
    <property type="match status" value="1"/>
</dbReference>
<dbReference type="Pfam" id="PF01715">
    <property type="entry name" value="IPPT"/>
    <property type="match status" value="1"/>
</dbReference>
<dbReference type="SUPFAM" id="SSF52540">
    <property type="entry name" value="P-loop containing nucleoside triphosphate hydrolases"/>
    <property type="match status" value="1"/>
</dbReference>
<comment type="function">
    <text evidence="1">Catalyzes the transfer of a dimethylallyl group onto the adenine at position 37 in tRNAs that read codons beginning with uridine, leading to the formation of N6-(dimethylallyl)adenosine (i(6)A).</text>
</comment>
<comment type="catalytic activity">
    <reaction evidence="1">
        <text>adenosine(37) in tRNA + dimethylallyl diphosphate = N(6)-dimethylallyladenosine(37) in tRNA + diphosphate</text>
        <dbReference type="Rhea" id="RHEA:26482"/>
        <dbReference type="Rhea" id="RHEA-COMP:10162"/>
        <dbReference type="Rhea" id="RHEA-COMP:10375"/>
        <dbReference type="ChEBI" id="CHEBI:33019"/>
        <dbReference type="ChEBI" id="CHEBI:57623"/>
        <dbReference type="ChEBI" id="CHEBI:74411"/>
        <dbReference type="ChEBI" id="CHEBI:74415"/>
        <dbReference type="EC" id="2.5.1.75"/>
    </reaction>
</comment>
<comment type="cofactor">
    <cofactor evidence="1">
        <name>Mg(2+)</name>
        <dbReference type="ChEBI" id="CHEBI:18420"/>
    </cofactor>
</comment>
<comment type="subunit">
    <text evidence="1">Monomer.</text>
</comment>
<comment type="similarity">
    <text evidence="1">Belongs to the IPP transferase family.</text>
</comment>
<protein>
    <recommendedName>
        <fullName evidence="1">tRNA dimethylallyltransferase</fullName>
        <ecNumber evidence="1">2.5.1.75</ecNumber>
    </recommendedName>
    <alternativeName>
        <fullName evidence="1">Dimethylallyl diphosphate:tRNA dimethylallyltransferase</fullName>
        <shortName evidence="1">DMAPP:tRNA dimethylallyltransferase</shortName>
        <shortName evidence="1">DMATase</shortName>
    </alternativeName>
    <alternativeName>
        <fullName evidence="1">Isopentenyl-diphosphate:tRNA isopentenyltransferase</fullName>
        <shortName evidence="1">IPP transferase</shortName>
        <shortName evidence="1">IPPT</shortName>
        <shortName evidence="1">IPTase</shortName>
    </alternativeName>
</protein>
<reference key="1">
    <citation type="submission" date="2006-06" db="EMBL/GenBank/DDBJ databases">
        <title>Complete sequence of Rubrobacter xylanophilus DSM 9941.</title>
        <authorList>
            <consortium name="US DOE Joint Genome Institute"/>
            <person name="Copeland A."/>
            <person name="Lucas S."/>
            <person name="Lapidus A."/>
            <person name="Barry K."/>
            <person name="Detter J.C."/>
            <person name="Glavina del Rio T."/>
            <person name="Hammon N."/>
            <person name="Israni S."/>
            <person name="Dalin E."/>
            <person name="Tice H."/>
            <person name="Pitluck S."/>
            <person name="Munk A.C."/>
            <person name="Brettin T."/>
            <person name="Bruce D."/>
            <person name="Han C."/>
            <person name="Tapia R."/>
            <person name="Gilna P."/>
            <person name="Schmutz J."/>
            <person name="Larimer F."/>
            <person name="Land M."/>
            <person name="Hauser L."/>
            <person name="Kyrpides N."/>
            <person name="Lykidis A."/>
            <person name="da Costa M.S."/>
            <person name="Rainey F.A."/>
            <person name="Empadinhas N."/>
            <person name="Jolivet E."/>
            <person name="Battista J.R."/>
            <person name="Richardson P."/>
        </authorList>
    </citation>
    <scope>NUCLEOTIDE SEQUENCE [LARGE SCALE GENOMIC DNA]</scope>
    <source>
        <strain>DSM 9941 / JCM 11954 / NBRC 16129 / PRD-1</strain>
    </source>
</reference>
<organism>
    <name type="scientific">Rubrobacter xylanophilus (strain DSM 9941 / JCM 11954 / NBRC 16129 / PRD-1)</name>
    <dbReference type="NCBI Taxonomy" id="266117"/>
    <lineage>
        <taxon>Bacteria</taxon>
        <taxon>Bacillati</taxon>
        <taxon>Actinomycetota</taxon>
        <taxon>Rubrobacteria</taxon>
        <taxon>Rubrobacterales</taxon>
        <taxon>Rubrobacteraceae</taxon>
        <taxon>Rubrobacter</taxon>
    </lineage>
</organism>
<keyword id="KW-0067">ATP-binding</keyword>
<keyword id="KW-0460">Magnesium</keyword>
<keyword id="KW-0547">Nucleotide-binding</keyword>
<keyword id="KW-1185">Reference proteome</keyword>
<keyword id="KW-0808">Transferase</keyword>
<keyword id="KW-0819">tRNA processing</keyword>